<dbReference type="EMBL" id="M93127">
    <property type="protein sequence ID" value="AAA42815.1"/>
    <property type="molecule type" value="mRNA"/>
</dbReference>
<dbReference type="EMBL" id="AF295543">
    <property type="protein sequence ID" value="AAL49395.1"/>
    <property type="molecule type" value="Genomic_RNA"/>
</dbReference>
<dbReference type="EMBL" id="AF295544">
    <property type="protein sequence ID" value="AAL49406.1"/>
    <property type="molecule type" value="Genomic_RNA"/>
</dbReference>
<dbReference type="PIR" id="JQ1641">
    <property type="entry name" value="JQ1641"/>
</dbReference>
<dbReference type="SMR" id="P33454"/>
<dbReference type="DIP" id="DIP-521N"/>
<dbReference type="IntAct" id="P33454">
    <property type="interactions" value="2"/>
</dbReference>
<dbReference type="Proteomes" id="UP000007616">
    <property type="component" value="Genome"/>
</dbReference>
<dbReference type="GO" id="GO:0030430">
    <property type="term" value="C:host cell cytoplasm"/>
    <property type="evidence" value="ECO:0007669"/>
    <property type="project" value="UniProtKB-SubCell"/>
</dbReference>
<dbReference type="GO" id="GO:0044423">
    <property type="term" value="C:virion component"/>
    <property type="evidence" value="ECO:0007669"/>
    <property type="project" value="UniProtKB-KW"/>
</dbReference>
<dbReference type="GO" id="GO:0003968">
    <property type="term" value="F:RNA-directed RNA polymerase activity"/>
    <property type="evidence" value="ECO:0007669"/>
    <property type="project" value="InterPro"/>
</dbReference>
<dbReference type="GO" id="GO:0085034">
    <property type="term" value="P:symbiont-mediated suppression of host NF-kappaB cascade"/>
    <property type="evidence" value="ECO:0007669"/>
    <property type="project" value="UniProtKB-KW"/>
</dbReference>
<dbReference type="InterPro" id="IPR003487">
    <property type="entry name" value="Pprotein_pneumovir"/>
</dbReference>
<dbReference type="Pfam" id="PF02478">
    <property type="entry name" value="Pneumo_phosprot"/>
    <property type="match status" value="1"/>
</dbReference>
<proteinExistence type="evidence at protein level"/>
<comment type="function">
    <text evidence="1 3">Plays critical roles in regulating RNA replication and transcription through its interactions with multiple proteins (By similarity). Tethers the RNA-directed RNA polymerase L to the nucleoprotein-RNA complex (By similarity). Recruits the M2-1 protein, a processivity factor that is required for efficient transcription of viral RNA (By similarity). Acts as a chaperone for neo-synthesized nucleoprotein by forming an N-P complex that preserves N in a monomeric and RNA-free state and prevents the association of nascent N with host cell RNAs (By similarity). Recruits the host phosphatase PP1 to inclusion bodies to regulate viral transcription (By similarity). Together with the nucleoprotein, sequesters host NF-kappa-B in inclusion bodies (IBs) thereby inhibiting this host defense pathway (PubMed:32878896).</text>
</comment>
<comment type="subunit">
    <text evidence="1">Homotetramer. Interacts with protein M2-1; the interaction between the two tetramers is required for the anti-termination and elongation transcriptional activities of protein M2-1. Interacts with host phosphatase PP1; this interaction recruits PP1 to the inclusion bodies. Formation of a complex PP1/M2-1/P allows P to target host PP1 phosphatase to the M2-1 substrate. Interacts (via C-terminus) with the nucleoprotein N (via N-terminus); the phosphorylated phosphoprotein P binds to N-RNA complex. Interacts (via N-terminus) with the monomeric RNA-free nucleoprotein N. Interacts (via C-terminus) with RNA-directed RNA polymerase L; the association of P and L forms the polymerase complex.</text>
</comment>
<comment type="subcellular location">
    <subcellularLocation>
        <location evidence="1">Virion</location>
    </subcellularLocation>
    <subcellularLocation>
        <location evidence="3">Host cytoplasm</location>
    </subcellularLocation>
    <text evidence="3">Localizes in cytoplasmic inclusion bodies.</text>
</comment>
<comment type="domain">
    <text evidence="1">The N-terminus is important for viral particle assembly. The oligomerization region is central. The C-terminus part contains binding regions for the RNA-directed RNA polymerase L and the nucleoprotein.</text>
</comment>
<comment type="PTM">
    <text evidence="1">Constitutively phosphorylated by host. Phosphorylation at S-116, S-117, S-119, S-232 and S-237 is required for transcription inhibition by M2-2 and viral particle egress. Phosphorylation at S-232 and S-237 increases the affinity of the binding to the nucleoprotein.</text>
</comment>
<comment type="similarity">
    <text evidence="4">Belongs to the pneumoviridae phosphoprotein P family.</text>
</comment>
<sequence length="241" mass="27254">MEKFAPEFHGEDANTKATKFLESLKGKFTSSKDSRKKDSIISVNSIDIELPKESPITSTNHNINQPSEINDTIAANQVHIRKPLVSFKEELPSSENPFTKLYKETIETFDNNEEESSYSYDEINDQTNDNITARLDRIDEKLSEIIGMLHTLVVASAGPTAARDGIRDAMVGLREEMIEKIRSEALMTNDRLEAMARLRDEESEKMTKDTSDEVKLTPTSEKLNMVLEDESSDNDLSLEDF</sequence>
<reference key="1">
    <citation type="journal article" date="1992" name="J. Gen. Virol.">
        <title>Sequence comparison between the phosphoprotein mRNAs of human and bovine respiratory syncytial viruses identifies a divergent domain in the predicted protein.</title>
        <authorList>
            <person name="Mallipeddi S.K."/>
            <person name="Samal S.K."/>
        </authorList>
    </citation>
    <scope>NUCLEOTIDE SEQUENCE [MRNA]</scope>
</reference>
<reference key="2">
    <citation type="journal article" date="2001" name="Virus Genes">
        <title>Rescue of bovine respiratory syncytial virus from cloned cDNA: entire genome sequence of BRSV strain A51908.</title>
        <authorList>
            <person name="Yunus A.S."/>
            <person name="Khattar S.K."/>
            <person name="Collins P.L."/>
            <person name="Samal S.K."/>
        </authorList>
    </citation>
    <scope>NUCLEOTIDE SEQUENCE [GENOMIC RNA]</scope>
    <source>
        <strain>A51908</strain>
        <strain>ATCC 51908</strain>
    </source>
</reference>
<reference key="3">
    <citation type="journal article" date="1996" name="J. Gen. Virol.">
        <title>Mapping the domains on the phosphoprotein of bovine respiratory syncytial virus required for N-P interaction using a two-hybrid system.</title>
        <authorList>
            <person name="Mallipeddi S.K."/>
            <person name="Lupiani B."/>
            <person name="Samal S.K."/>
        </authorList>
    </citation>
    <scope>INTERACTION WITH THE PHOSPHOPROTEIN</scope>
</reference>
<reference key="4">
    <citation type="journal article" date="2000" name="Virology">
        <title>Mutational analysis of the bovine respiratory syncytial virus nucleocapsid protein using a minigenome system: mutations that affect encapsidation, RNA synthesis, and interaction with the phosphoprotein.</title>
        <authorList>
            <person name="Khattar S.K."/>
            <person name="Yunus A.S."/>
            <person name="Collins P.L."/>
            <person name="Samal S.K."/>
        </authorList>
    </citation>
    <scope>INTERACTION WITH THE PHOSPHOPROTEIN</scope>
</reference>
<reference key="5">
    <citation type="journal article" date="2020" name="J. Virol.">
        <title>Respiratory syncytial virus sequesters NF-kappaB subunit p65 to cytoplasmic inclusion bodies to inhibit innate immune signalling.</title>
        <authorList>
            <person name="Jobe F."/>
            <person name="Simpson J."/>
            <person name="Hawes P."/>
            <person name="Guzman E."/>
            <person name="Bailey D."/>
        </authorList>
    </citation>
    <scope>FUNCTION</scope>
    <scope>SUBCELLULAR LOCATION</scope>
</reference>
<keyword id="KW-1035">Host cytoplasm</keyword>
<keyword id="KW-0945">Host-virus interaction</keyword>
<keyword id="KW-1100">Inhibition of host NF-kappa-B by virus</keyword>
<keyword id="KW-0597">Phosphoprotein</keyword>
<keyword id="KW-1185">Reference proteome</keyword>
<keyword id="KW-0693">Viral RNA replication</keyword>
<keyword id="KW-0946">Virion</keyword>
<organism>
    <name type="scientific">Bovine respiratory syncytial virus (strain A51908)</name>
    <name type="common">BRS</name>
    <dbReference type="NCBI Taxonomy" id="11247"/>
    <lineage>
        <taxon>Viruses</taxon>
        <taxon>Riboviria</taxon>
        <taxon>Orthornavirae</taxon>
        <taxon>Negarnaviricota</taxon>
        <taxon>Haploviricotina</taxon>
        <taxon>Monjiviricetes</taxon>
        <taxon>Mononegavirales</taxon>
        <taxon>Pneumoviridae</taxon>
        <taxon>Orthopneumovirus</taxon>
        <taxon>Orthopneumovirus bovis</taxon>
        <taxon>bovine respiratory syncytial virus</taxon>
    </lineage>
</organism>
<organismHost>
    <name type="scientific">Bos taurus</name>
    <name type="common">Bovine</name>
    <dbReference type="NCBI Taxonomy" id="9913"/>
</organismHost>
<feature type="chain" id="PRO_0000142720" description="Phosphoprotein">
    <location>
        <begin position="1"/>
        <end position="241"/>
    </location>
</feature>
<feature type="region of interest" description="Binding to monomeric RNA-free nucleoprotein" evidence="5">
    <location>
        <begin position="1"/>
        <end position="30"/>
    </location>
</feature>
<feature type="region of interest" description="Important for viral particle assembly" evidence="1">
    <location>
        <begin position="39"/>
        <end position="57"/>
    </location>
</feature>
<feature type="region of interest" description="Binding to host phosphatase PP1" evidence="1">
    <location>
        <begin position="81"/>
        <end position="87"/>
    </location>
</feature>
<feature type="region of interest" description="Binding to protein M2-1" evidence="1">
    <location>
        <begin position="90"/>
        <end position="110"/>
    </location>
</feature>
<feature type="region of interest" description="Oligomerization and binding to RNA-directed RNA polymerase L" evidence="1">
    <location>
        <begin position="120"/>
        <end position="160"/>
    </location>
</feature>
<feature type="region of interest" description="Disordered" evidence="2">
    <location>
        <begin position="199"/>
        <end position="241"/>
    </location>
</feature>
<feature type="region of interest" description="Binding to RNA-directed RNA polymerase L" evidence="1">
    <location>
        <begin position="216"/>
        <end position="232"/>
    </location>
</feature>
<feature type="region of interest" description="Binding to the N-RNA complex" evidence="5">
    <location>
        <begin position="232"/>
        <end position="241"/>
    </location>
</feature>
<feature type="compositionally biased region" description="Basic and acidic residues" evidence="2">
    <location>
        <begin position="199"/>
        <end position="215"/>
    </location>
</feature>
<feature type="compositionally biased region" description="Acidic residues" evidence="2">
    <location>
        <begin position="227"/>
        <end position="241"/>
    </location>
</feature>
<feature type="site" description="Interaction with protein M2-1" evidence="1">
    <location>
        <position position="108"/>
    </location>
</feature>
<feature type="modified residue" description="Phosphothreonine; by host" evidence="1">
    <location>
        <position position="108"/>
    </location>
</feature>
<feature type="modified residue" description="Phosphoserine; by host" evidence="1">
    <location>
        <position position="116"/>
    </location>
</feature>
<feature type="modified residue" description="Phosphoserine; by host" evidence="1">
    <location>
        <position position="117"/>
    </location>
</feature>
<feature type="modified residue" description="Phosphoserine; by host" evidence="1">
    <location>
        <position position="119"/>
    </location>
</feature>
<feature type="modified residue" description="Phosphoserine; by host" evidence="1">
    <location>
        <position position="232"/>
    </location>
</feature>
<feature type="modified residue" description="Phosphoserine; by host" evidence="1">
    <location>
        <position position="237"/>
    </location>
</feature>
<feature type="sequence variant" description="In strain: ATCC 51908.">
    <original>I</original>
    <variation>V</variation>
    <location>
        <position position="46"/>
    </location>
</feature>
<feature type="sequence variant" description="In strain: ATCC 51908.">
    <original>H</original>
    <variation>Q</variation>
    <location>
        <position position="61"/>
    </location>
</feature>
<feature type="sequence variant" description="In strain: ATCC 51908.">
    <original>A</original>
    <variation>T</variation>
    <location>
        <position position="75"/>
    </location>
</feature>
<feature type="sequence variant" description="In strain: ATCC 51908.">
    <original>K</original>
    <variation>R</variation>
    <location>
        <position position="100"/>
    </location>
</feature>
<name>PHOSP_BRSVA</name>
<gene>
    <name type="primary">P</name>
</gene>
<protein>
    <recommendedName>
        <fullName>Phosphoprotein</fullName>
        <shortName>Protein P</shortName>
    </recommendedName>
</protein>
<evidence type="ECO:0000250" key="1">
    <source>
        <dbReference type="UniProtKB" id="P03421"/>
    </source>
</evidence>
<evidence type="ECO:0000256" key="2">
    <source>
        <dbReference type="SAM" id="MobiDB-lite"/>
    </source>
</evidence>
<evidence type="ECO:0000269" key="3">
    <source>
    </source>
</evidence>
<evidence type="ECO:0000305" key="4"/>
<evidence type="ECO:0000305" key="5">
    <source>
    </source>
</evidence>
<accession>P33454</accession>
<accession>Q77KZ1</accession>
<accession>Q77L01</accession>